<proteinExistence type="inferred from homology"/>
<keyword id="KW-0255">Endonuclease</keyword>
<keyword id="KW-0378">Hydrolase</keyword>
<keyword id="KW-0479">Metal-binding</keyword>
<keyword id="KW-0540">Nuclease</keyword>
<keyword id="KW-0819">tRNA processing</keyword>
<keyword id="KW-0862">Zinc</keyword>
<gene>
    <name evidence="1" type="primary">rnz</name>
    <name type="ordered locus">MmarC7_0153</name>
</gene>
<accession>A6VFJ7</accession>
<reference key="1">
    <citation type="submission" date="2007-06" db="EMBL/GenBank/DDBJ databases">
        <title>Complete sequence of Methanococcus maripaludis C7.</title>
        <authorList>
            <consortium name="US DOE Joint Genome Institute"/>
            <person name="Copeland A."/>
            <person name="Lucas S."/>
            <person name="Lapidus A."/>
            <person name="Barry K."/>
            <person name="Glavina del Rio T."/>
            <person name="Dalin E."/>
            <person name="Tice H."/>
            <person name="Pitluck S."/>
            <person name="Clum A."/>
            <person name="Schmutz J."/>
            <person name="Larimer F."/>
            <person name="Land M."/>
            <person name="Hauser L."/>
            <person name="Kyrpides N."/>
            <person name="Anderson I."/>
            <person name="Sieprawska-Lupa M."/>
            <person name="Whitman W.B."/>
            <person name="Richardson P."/>
        </authorList>
    </citation>
    <scope>NUCLEOTIDE SEQUENCE [LARGE SCALE GENOMIC DNA]</scope>
    <source>
        <strain>C7 / ATCC BAA-1331</strain>
    </source>
</reference>
<protein>
    <recommendedName>
        <fullName evidence="1">Ribonuclease Z</fullName>
        <shortName evidence="1">RNase Z</shortName>
        <ecNumber evidence="1">3.1.26.11</ecNumber>
    </recommendedName>
    <alternativeName>
        <fullName evidence="1">tRNA 3 endonuclease</fullName>
    </alternativeName>
    <alternativeName>
        <fullName evidence="1">tRNase Z</fullName>
    </alternativeName>
</protein>
<name>RNZ_METM7</name>
<dbReference type="EC" id="3.1.26.11" evidence="1"/>
<dbReference type="EMBL" id="CP000745">
    <property type="protein sequence ID" value="ABR65223.1"/>
    <property type="molecule type" value="Genomic_DNA"/>
</dbReference>
<dbReference type="SMR" id="A6VFJ7"/>
<dbReference type="STRING" id="426368.MmarC7_0153"/>
<dbReference type="KEGG" id="mmz:MmarC7_0153"/>
<dbReference type="eggNOG" id="arCOG00501">
    <property type="taxonomic scope" value="Archaea"/>
</dbReference>
<dbReference type="HOGENOM" id="CLU_031317_2_1_2"/>
<dbReference type="OrthoDB" id="85118at2157"/>
<dbReference type="GO" id="GO:0042781">
    <property type="term" value="F:3'-tRNA processing endoribonuclease activity"/>
    <property type="evidence" value="ECO:0007669"/>
    <property type="project" value="UniProtKB-UniRule"/>
</dbReference>
<dbReference type="GO" id="GO:0008270">
    <property type="term" value="F:zinc ion binding"/>
    <property type="evidence" value="ECO:0007669"/>
    <property type="project" value="UniProtKB-UniRule"/>
</dbReference>
<dbReference type="CDD" id="cd07717">
    <property type="entry name" value="RNaseZ_ZiPD-like_MBL-fold"/>
    <property type="match status" value="1"/>
</dbReference>
<dbReference type="Gene3D" id="3.60.15.10">
    <property type="entry name" value="Ribonuclease Z/Hydroxyacylglutathione hydrolase-like"/>
    <property type="match status" value="1"/>
</dbReference>
<dbReference type="HAMAP" id="MF_01818">
    <property type="entry name" value="RNase_Z_BN"/>
    <property type="match status" value="1"/>
</dbReference>
<dbReference type="InterPro" id="IPR036866">
    <property type="entry name" value="RibonucZ/Hydroxyglut_hydro"/>
</dbReference>
<dbReference type="InterPro" id="IPR013471">
    <property type="entry name" value="RNase_Z/BN"/>
</dbReference>
<dbReference type="InterPro" id="IPR027794">
    <property type="entry name" value="tRNase_Z_dom"/>
</dbReference>
<dbReference type="NCBIfam" id="NF000801">
    <property type="entry name" value="PRK00055.1-3"/>
    <property type="match status" value="1"/>
</dbReference>
<dbReference type="NCBIfam" id="TIGR02651">
    <property type="entry name" value="RNase_Z"/>
    <property type="match status" value="1"/>
</dbReference>
<dbReference type="PANTHER" id="PTHR46018">
    <property type="entry name" value="ZINC PHOSPHODIESTERASE ELAC PROTEIN 1"/>
    <property type="match status" value="1"/>
</dbReference>
<dbReference type="PANTHER" id="PTHR46018:SF2">
    <property type="entry name" value="ZINC PHOSPHODIESTERASE ELAC PROTEIN 1"/>
    <property type="match status" value="1"/>
</dbReference>
<dbReference type="Pfam" id="PF13691">
    <property type="entry name" value="Lactamase_B_4"/>
    <property type="match status" value="1"/>
</dbReference>
<dbReference type="SUPFAM" id="SSF56281">
    <property type="entry name" value="Metallo-hydrolase/oxidoreductase"/>
    <property type="match status" value="1"/>
</dbReference>
<sequence>MKLTFLGTGAAIPTKYRAHPSISLKFDGEIFLFDCGENTQRQIIFTDVSPMKINNIFISHLHGDHILGIPGLMQSIAFQGRTKPLNIYGPKETAKMIENILNVGYHSIDYPINVYEISAKSPEKIISSDNYEVFSFPVVHSVPALAYVFKQVKKPRMDLEKVNKLGIEIGPDLKRLKDGFNIELNGKIITPDDVTVPPKKGICVGYSGDTIPLNEFAEFLKELKCTTLIHEATFDKSMDKNAKETLHSTVSDALNIAKLSGVNTVILTHISARYDEISAYEKDIVEFKAEHPDLHILIAEDLMEYSLKGK</sequence>
<feature type="chain" id="PRO_1000070299" description="Ribonuclease Z">
    <location>
        <begin position="1"/>
        <end position="310"/>
    </location>
</feature>
<feature type="active site" description="Proton acceptor" evidence="1">
    <location>
        <position position="64"/>
    </location>
</feature>
<feature type="binding site" evidence="1">
    <location>
        <position position="60"/>
    </location>
    <ligand>
        <name>Zn(2+)</name>
        <dbReference type="ChEBI" id="CHEBI:29105"/>
        <label>1</label>
        <note>catalytic</note>
    </ligand>
</feature>
<feature type="binding site" evidence="1">
    <location>
        <position position="62"/>
    </location>
    <ligand>
        <name>Zn(2+)</name>
        <dbReference type="ChEBI" id="CHEBI:29105"/>
        <label>1</label>
        <note>catalytic</note>
    </ligand>
</feature>
<feature type="binding site" evidence="1">
    <location>
        <position position="64"/>
    </location>
    <ligand>
        <name>Zn(2+)</name>
        <dbReference type="ChEBI" id="CHEBI:29105"/>
        <label>2</label>
        <note>catalytic</note>
    </ligand>
</feature>
<feature type="binding site" evidence="1">
    <location>
        <position position="65"/>
    </location>
    <ligand>
        <name>Zn(2+)</name>
        <dbReference type="ChEBI" id="CHEBI:29105"/>
        <label>2</label>
        <note>catalytic</note>
    </ligand>
</feature>
<feature type="binding site" evidence="1">
    <location>
        <position position="140"/>
    </location>
    <ligand>
        <name>Zn(2+)</name>
        <dbReference type="ChEBI" id="CHEBI:29105"/>
        <label>1</label>
        <note>catalytic</note>
    </ligand>
</feature>
<feature type="binding site" evidence="1">
    <location>
        <position position="209"/>
    </location>
    <ligand>
        <name>Zn(2+)</name>
        <dbReference type="ChEBI" id="CHEBI:29105"/>
        <label>1</label>
        <note>catalytic</note>
    </ligand>
</feature>
<feature type="binding site" evidence="1">
    <location>
        <position position="209"/>
    </location>
    <ligand>
        <name>Zn(2+)</name>
        <dbReference type="ChEBI" id="CHEBI:29105"/>
        <label>2</label>
        <note>catalytic</note>
    </ligand>
</feature>
<feature type="binding site" evidence="1">
    <location>
        <position position="269"/>
    </location>
    <ligand>
        <name>Zn(2+)</name>
        <dbReference type="ChEBI" id="CHEBI:29105"/>
        <label>2</label>
        <note>catalytic</note>
    </ligand>
</feature>
<evidence type="ECO:0000255" key="1">
    <source>
        <dbReference type="HAMAP-Rule" id="MF_01818"/>
    </source>
</evidence>
<comment type="function">
    <text evidence="1">Zinc phosphodiesterase, which displays some tRNA 3'-processing endonuclease activity. Probably involved in tRNA maturation, by removing a 3'-trailer from precursor tRNA.</text>
</comment>
<comment type="catalytic activity">
    <reaction evidence="1">
        <text>Endonucleolytic cleavage of RNA, removing extra 3' nucleotides from tRNA precursor, generating 3' termini of tRNAs. A 3'-hydroxy group is left at the tRNA terminus and a 5'-phosphoryl group is left at the trailer molecule.</text>
        <dbReference type="EC" id="3.1.26.11"/>
    </reaction>
</comment>
<comment type="cofactor">
    <cofactor evidence="1">
        <name>Zn(2+)</name>
        <dbReference type="ChEBI" id="CHEBI:29105"/>
    </cofactor>
    <text evidence="1">Binds 2 Zn(2+) ions.</text>
</comment>
<comment type="subunit">
    <text evidence="1">Homodimer.</text>
</comment>
<comment type="similarity">
    <text evidence="1">Belongs to the RNase Z family.</text>
</comment>
<organism>
    <name type="scientific">Methanococcus maripaludis (strain C7 / ATCC BAA-1331)</name>
    <dbReference type="NCBI Taxonomy" id="426368"/>
    <lineage>
        <taxon>Archaea</taxon>
        <taxon>Methanobacteriati</taxon>
        <taxon>Methanobacteriota</taxon>
        <taxon>Methanomada group</taxon>
        <taxon>Methanococci</taxon>
        <taxon>Methanococcales</taxon>
        <taxon>Methanococcaceae</taxon>
        <taxon>Methanococcus</taxon>
    </lineage>
</organism>